<organism evidence="12">
    <name type="scientific">Papaver somniferum</name>
    <name type="common">Opium poppy</name>
    <dbReference type="NCBI Taxonomy" id="3469"/>
    <lineage>
        <taxon>Eukaryota</taxon>
        <taxon>Viridiplantae</taxon>
        <taxon>Streptophyta</taxon>
        <taxon>Embryophyta</taxon>
        <taxon>Tracheophyta</taxon>
        <taxon>Spermatophyta</taxon>
        <taxon>Magnoliopsida</taxon>
        <taxon>Ranunculales</taxon>
        <taxon>Papaveraceae</taxon>
        <taxon>Papaveroideae</taxon>
        <taxon>Papaver</taxon>
    </lineage>
</organism>
<name>C80B3_PAPSO</name>
<feature type="chain" id="PRO_0000433982" description="(S)-N-methylcoclaurine 3'-hydroxylase isozyme 1">
    <location>
        <begin position="1" status="less than"/>
        <end position="481"/>
    </location>
</feature>
<feature type="binding site" description="axial binding residue" evidence="2">
    <location>
        <position position="423"/>
    </location>
    <ligand>
        <name>heme</name>
        <dbReference type="ChEBI" id="CHEBI:30413"/>
    </ligand>
    <ligandPart>
        <name>Fe</name>
        <dbReference type="ChEBI" id="CHEBI:18248"/>
    </ligandPart>
</feature>
<feature type="sequence conflict" description="In Ref. 1; AAF61400." evidence="11" ref="1">
    <original>E</original>
    <variation>D</variation>
    <location>
        <position position="125"/>
    </location>
</feature>
<feature type="sequence conflict" description="In Ref. 1; AAF61400." evidence="11" ref="1">
    <original>R</original>
    <variation>S</variation>
    <location>
        <position position="247"/>
    </location>
</feature>
<feature type="sequence conflict" description="In Ref. 1; AAF61400." evidence="11" ref="1">
    <original>F</original>
    <variation>L</variation>
    <location>
        <position position="448"/>
    </location>
</feature>
<feature type="non-terminal residue" evidence="12">
    <location>
        <position position="1"/>
    </location>
</feature>
<dbReference type="EC" id="1.14.14.102" evidence="1"/>
<dbReference type="EMBL" id="AF134590">
    <property type="protein sequence ID" value="AAF61400.1"/>
    <property type="molecule type" value="mRNA"/>
</dbReference>
<dbReference type="EMBL" id="AF191772">
    <property type="protein sequence ID" value="AAF05621.1"/>
    <property type="molecule type" value="mRNA"/>
</dbReference>
<dbReference type="SMR" id="Q9SP06"/>
<dbReference type="UniPathway" id="UPA00306">
    <property type="reaction ID" value="UER00443"/>
</dbReference>
<dbReference type="GO" id="GO:0005783">
    <property type="term" value="C:endoplasmic reticulum"/>
    <property type="evidence" value="ECO:0000314"/>
    <property type="project" value="UniProtKB"/>
</dbReference>
<dbReference type="GO" id="GO:0020037">
    <property type="term" value="F:heme binding"/>
    <property type="evidence" value="ECO:0007669"/>
    <property type="project" value="InterPro"/>
</dbReference>
<dbReference type="GO" id="GO:0005506">
    <property type="term" value="F:iron ion binding"/>
    <property type="evidence" value="ECO:0007669"/>
    <property type="project" value="InterPro"/>
</dbReference>
<dbReference type="GO" id="GO:0050593">
    <property type="term" value="F:N-methylcoclaurine 3'-monooxygenase activity"/>
    <property type="evidence" value="ECO:0000315"/>
    <property type="project" value="UniProtKB"/>
</dbReference>
<dbReference type="GO" id="GO:1901012">
    <property type="term" value="P:(S)-reticuline biosynthetic process"/>
    <property type="evidence" value="ECO:0000315"/>
    <property type="project" value="UniProtKB"/>
</dbReference>
<dbReference type="GO" id="GO:0002238">
    <property type="term" value="P:response to molecule of fungal origin"/>
    <property type="evidence" value="ECO:0000314"/>
    <property type="project" value="UniProtKB"/>
</dbReference>
<dbReference type="CDD" id="cd11073">
    <property type="entry name" value="CYP76-like"/>
    <property type="match status" value="1"/>
</dbReference>
<dbReference type="FunFam" id="1.10.630.10:FF:000126">
    <property type="entry name" value="Predicted protein"/>
    <property type="match status" value="1"/>
</dbReference>
<dbReference type="Gene3D" id="1.10.630.10">
    <property type="entry name" value="Cytochrome P450"/>
    <property type="match status" value="1"/>
</dbReference>
<dbReference type="InterPro" id="IPR001128">
    <property type="entry name" value="Cyt_P450"/>
</dbReference>
<dbReference type="InterPro" id="IPR017972">
    <property type="entry name" value="Cyt_P450_CS"/>
</dbReference>
<dbReference type="InterPro" id="IPR002401">
    <property type="entry name" value="Cyt_P450_E_grp-I"/>
</dbReference>
<dbReference type="InterPro" id="IPR036396">
    <property type="entry name" value="Cyt_P450_sf"/>
</dbReference>
<dbReference type="PANTHER" id="PTHR47950:SF49">
    <property type="entry name" value="CYTOCHROME P450"/>
    <property type="match status" value="1"/>
</dbReference>
<dbReference type="PANTHER" id="PTHR47950">
    <property type="entry name" value="CYTOCHROME P450, FAMILY 76, SUBFAMILY C, POLYPEPTIDE 5-RELATED"/>
    <property type="match status" value="1"/>
</dbReference>
<dbReference type="Pfam" id="PF00067">
    <property type="entry name" value="p450"/>
    <property type="match status" value="1"/>
</dbReference>
<dbReference type="PRINTS" id="PR00463">
    <property type="entry name" value="EP450I"/>
</dbReference>
<dbReference type="PRINTS" id="PR00385">
    <property type="entry name" value="P450"/>
</dbReference>
<dbReference type="SUPFAM" id="SSF48264">
    <property type="entry name" value="Cytochrome P450"/>
    <property type="match status" value="1"/>
</dbReference>
<dbReference type="PROSITE" id="PS00086">
    <property type="entry name" value="CYTOCHROME_P450"/>
    <property type="match status" value="1"/>
</dbReference>
<protein>
    <recommendedName>
        <fullName evidence="11">(S)-N-methylcoclaurine 3'-hydroxylase isozyme 1</fullName>
        <ecNumber evidence="1">1.14.14.102</ecNumber>
    </recommendedName>
    <alternativeName>
        <fullName evidence="9">Cytochrome P450 80B1</fullName>
    </alternativeName>
    <alternativeName>
        <fullName evidence="10">Cytochrome P450 80B3</fullName>
    </alternativeName>
</protein>
<reference key="1">
    <citation type="submission" date="1999-03" db="EMBL/GenBank/DDBJ databases">
        <title>Distribution of morphinan and benzophenanthridine alkaloid gene transcript accumulation in the opium poppy Papaver somniferum.</title>
        <authorList>
            <person name="Huang F.-C."/>
            <person name="Kutchan T.M."/>
        </authorList>
    </citation>
    <scope>NUCLEOTIDE SEQUENCE [MRNA]</scope>
</reference>
<reference key="2">
    <citation type="journal article" date="2005" name="Plant Physiol.">
        <title>Sanguinarine biosynthesis is associated with the endoplasmic reticulum in cultured opium poppy cells after elicitor treatment.</title>
        <authorList>
            <person name="Alcantara J."/>
            <person name="Bird D.A."/>
            <person name="Franceschi V.R."/>
            <person name="Facchini P.J."/>
        </authorList>
    </citation>
    <scope>NUCLEOTIDE SEQUENCE [MRNA]</scope>
    <scope>INDUCTION BY ELICITOR</scope>
    <scope>SUBCELLULAR LOCATION</scope>
    <scope>FUNCTION</scope>
    <source>
        <strain>cv. Marianne</strain>
    </source>
</reference>
<reference key="3">
    <citation type="journal article" date="2003" name="Plant Cell">
        <title>A tale of three cell types: alkaloid biosynthesis is localized to sieve elements in opium poppy.</title>
        <authorList>
            <person name="Bird D.A."/>
            <person name="Franceschi V.R."/>
            <person name="Facchini P.J."/>
        </authorList>
    </citation>
    <scope>TISSUE SPECIFICITY</scope>
    <scope>SUBCELLULAR LOCATION</scope>
</reference>
<reference key="4">
    <citation type="journal article" date="2006" name="Plant J.">
        <title>The role of phloem sieve elements and laticifers in the biosynthesis and accumulation of alkaloids in opium poppy.</title>
        <authorList>
            <person name="Samanani N."/>
            <person name="Alcantara J."/>
            <person name="Bourgault R."/>
            <person name="Zulak K.G."/>
            <person name="Facchini P.J."/>
        </authorList>
    </citation>
    <scope>TISSUE SPECIFICITY</scope>
    <scope>DEVELOPMENTAL STAGE</scope>
    <source>
        <strain>cv. Louisiana</strain>
        <strain>cv. Marianne</strain>
    </source>
</reference>
<reference key="5">
    <citation type="journal article" date="2007" name="Metab. Eng.">
        <title>Metabolic engineering with a morphine biosynthetic P450 in opium poppy surpasses breeding.</title>
        <authorList>
            <person name="Frick S."/>
            <person name="Kramell R."/>
            <person name="Kutchan T.M."/>
        </authorList>
    </citation>
    <scope>FUNCTION</scope>
    <scope>NOMENCLATURE</scope>
</reference>
<reference key="6">
    <citation type="journal article" date="2012" name="Plant J.">
        <title>Systematic silencing of benzylisoquinoline alkaloid biosynthetic genes reveals the major route to papaverine in opium poppy.</title>
        <authorList>
            <person name="Desgagne-Penix I."/>
            <person name="Facchini P.J."/>
        </authorList>
    </citation>
    <scope>FUNCTION</scope>
</reference>
<accession>Q9SP06</accession>
<accession>Q9M7I3</accession>
<evidence type="ECO:0000250" key="1">
    <source>
        <dbReference type="UniProtKB" id="O64899"/>
    </source>
</evidence>
<evidence type="ECO:0000250" key="2">
    <source>
        <dbReference type="UniProtKB" id="P04798"/>
    </source>
</evidence>
<evidence type="ECO:0000255" key="3">
    <source>
        <dbReference type="RuleBase" id="RU000461"/>
    </source>
</evidence>
<evidence type="ECO:0000269" key="4">
    <source>
    </source>
</evidence>
<evidence type="ECO:0000269" key="5">
    <source>
    </source>
</evidence>
<evidence type="ECO:0000269" key="6">
    <source>
    </source>
</evidence>
<evidence type="ECO:0000269" key="7">
    <source>
    </source>
</evidence>
<evidence type="ECO:0000269" key="8">
    <source>
    </source>
</evidence>
<evidence type="ECO:0000303" key="9">
    <source>
    </source>
</evidence>
<evidence type="ECO:0000303" key="10">
    <source>
    </source>
</evidence>
<evidence type="ECO:0000305" key="11"/>
<evidence type="ECO:0000312" key="12">
    <source>
        <dbReference type="EMBL" id="AAF05621.1"/>
    </source>
</evidence>
<gene>
    <name evidence="10" type="primary">CYP80B3</name>
    <name evidence="9" type="synonym">CYP80B1</name>
    <name evidence="11" type="synonym">NMCH1</name>
</gene>
<comment type="function">
    <text evidence="5 7 8">Cytochrome P450 monooxygenase involved in the biosynthesis of benzylisoquinoline alkaloids. Catalyzes the 3'-hydroxylation of (S)-N-methylcoclaurine.</text>
</comment>
<comment type="catalytic activity">
    <reaction evidence="1">
        <text>(S)-N-methylcoclaurine + reduced [NADPH--hemoprotein reductase] + O2 = (S)-3'-hydroxy-N-methylcoclaurine + oxidized [NADPH--hemoprotein reductase] + H2O + H(+)</text>
        <dbReference type="Rhea" id="RHEA:16649"/>
        <dbReference type="Rhea" id="RHEA-COMP:11964"/>
        <dbReference type="Rhea" id="RHEA-COMP:11965"/>
        <dbReference type="ChEBI" id="CHEBI:15377"/>
        <dbReference type="ChEBI" id="CHEBI:15378"/>
        <dbReference type="ChEBI" id="CHEBI:15379"/>
        <dbReference type="ChEBI" id="CHEBI:57618"/>
        <dbReference type="ChEBI" id="CHEBI:57993"/>
        <dbReference type="ChEBI" id="CHEBI:58010"/>
        <dbReference type="ChEBI" id="CHEBI:58210"/>
        <dbReference type="EC" id="1.14.14.102"/>
    </reaction>
</comment>
<comment type="cofactor">
    <cofactor evidence="2">
        <name>heme</name>
        <dbReference type="ChEBI" id="CHEBI:30413"/>
    </cofactor>
</comment>
<comment type="pathway">
    <text>Alkaloid biosynthesis; (S)-reticuline biosynthesis; (S)-reticuline from (S)-norcoclaurine: step 3/4.</text>
</comment>
<comment type="subcellular location">
    <subcellularLocation>
        <location evidence="5">Endoplasmic reticulum</location>
    </subcellularLocation>
    <text evidence="4 11">Like CYP80B3b (AC I3V6B1), the full-length CYP80B3 is probably anchored to the membrane by a signal anchor (Probable). Localized to the parietal region of the sieve element cytoplasm (PubMed:14508000).</text>
</comment>
<comment type="tissue specificity">
    <text evidence="4 6">Restricted to the parietal region of sieve elements adjacent or proximal to laticifers in roots, stems, leaves, carpels and hypocotyls.</text>
</comment>
<comment type="developmental stage">
    <text evidence="6">Increases rapidly between 1 and 3 days after seed germination.</text>
</comment>
<comment type="induction">
    <text evidence="5">Up-regulated upon elicitor treatment (at protein level).</text>
</comment>
<comment type="similarity">
    <text evidence="3">Belongs to the cytochrome P450 family.</text>
</comment>
<keyword id="KW-0017">Alkaloid metabolism</keyword>
<keyword id="KW-0256">Endoplasmic reticulum</keyword>
<keyword id="KW-0349">Heme</keyword>
<keyword id="KW-0408">Iron</keyword>
<keyword id="KW-0479">Metal-binding</keyword>
<keyword id="KW-0503">Monooxygenase</keyword>
<keyword id="KW-0560">Oxidoreductase</keyword>
<proteinExistence type="evidence at protein level"/>
<sequence>SLVAVVITTFLYLIFRDSSPKGLPPGPKPWPIVGNLLQLGEKPHSQFAQLAETYGDLFSLKLGSETVVVASTPLAASEILKTHDRVLSGRYVFQSFRVKEHVENSIVWSECNETWKKLRKVCRTELFTQKMIESQAEVRESKAMEMVEYLKKNVGNEVKIAEVVFGTLVNIFGNLIFSQNIFKLGDESSGSVEMKEHLWRMLELGNSTNPADYFPFLGKFDLFGQSKDVADCLQGIYSVWGAMLKERKIAKQHNNSKKNDFVEILLDSGLDDQQINALLMEIFGAGTETSASTIEWALSELTKNPQVTANMRLELLSVVGKRPVKESDIPNMPYLQAFVKETLRLHPATPLLLPRRALETCKVLNYTIPKECQIMVNAWGIGRDPKRWTDPLKFSPERFLNSSIDFKGNDFELIPFGAGRRICPGVPLATQFISLIVSSLVQNFDWGFPKGMDPSQLIMEEKFGLTLQKEPPLYIVPKTRD</sequence>